<sequence length="273" mass="30430">MSNLQDIVVKEMKVKPSVESKSETRHIIQFIKNYVQSHSFIKSLTLGISGGQDSTLAGKLCQLAVNELKEDGNDCEFIAVKLPYGEQKDAAEVEDALTYIQPDKIITVNIKPAVDQSIQSLKEAGVNLTDFQKGNEKARERMKVQFSIASKQKGIVVGTDHSAENVTGFYTKYGDGAADIAPLFGLNKRQGKQLLAYLAAPKHLYEKTPTADLEDDKPQLPDEEALGVSYDDIDDYLEGKSVSSESKEIIENHYIKNAHKRELAYTRYTWPKN</sequence>
<proteinExistence type="inferred from homology"/>
<accession>Q49YV6</accession>
<comment type="function">
    <text evidence="1">Catalyzes the ATP-dependent amidation of deamido-NAD to form NAD. Uses ammonia as a nitrogen source.</text>
</comment>
<comment type="catalytic activity">
    <reaction evidence="1">
        <text>deamido-NAD(+) + NH4(+) + ATP = AMP + diphosphate + NAD(+) + H(+)</text>
        <dbReference type="Rhea" id="RHEA:21188"/>
        <dbReference type="ChEBI" id="CHEBI:15378"/>
        <dbReference type="ChEBI" id="CHEBI:28938"/>
        <dbReference type="ChEBI" id="CHEBI:30616"/>
        <dbReference type="ChEBI" id="CHEBI:33019"/>
        <dbReference type="ChEBI" id="CHEBI:57540"/>
        <dbReference type="ChEBI" id="CHEBI:58437"/>
        <dbReference type="ChEBI" id="CHEBI:456215"/>
        <dbReference type="EC" id="6.3.1.5"/>
    </reaction>
</comment>
<comment type="pathway">
    <text evidence="1">Cofactor biosynthesis; NAD(+) biosynthesis; NAD(+) from deamido-NAD(+) (ammonia route): step 1/1.</text>
</comment>
<comment type="subunit">
    <text evidence="1">Homodimer.</text>
</comment>
<comment type="similarity">
    <text evidence="1">Belongs to the NAD synthetase family.</text>
</comment>
<organism>
    <name type="scientific">Staphylococcus saprophyticus subsp. saprophyticus (strain ATCC 15305 / DSM 20229 / NCIMB 8711 / NCTC 7292 / S-41)</name>
    <dbReference type="NCBI Taxonomy" id="342451"/>
    <lineage>
        <taxon>Bacteria</taxon>
        <taxon>Bacillati</taxon>
        <taxon>Bacillota</taxon>
        <taxon>Bacilli</taxon>
        <taxon>Bacillales</taxon>
        <taxon>Staphylococcaceae</taxon>
        <taxon>Staphylococcus</taxon>
    </lineage>
</organism>
<name>NADE_STAS1</name>
<protein>
    <recommendedName>
        <fullName evidence="1">NH(3)-dependent NAD(+) synthetase</fullName>
        <ecNumber evidence="1">6.3.1.5</ecNumber>
    </recommendedName>
</protein>
<reference key="1">
    <citation type="journal article" date="2005" name="Proc. Natl. Acad. Sci. U.S.A.">
        <title>Whole genome sequence of Staphylococcus saprophyticus reveals the pathogenesis of uncomplicated urinary tract infection.</title>
        <authorList>
            <person name="Kuroda M."/>
            <person name="Yamashita A."/>
            <person name="Hirakawa H."/>
            <person name="Kumano M."/>
            <person name="Morikawa K."/>
            <person name="Higashide M."/>
            <person name="Maruyama A."/>
            <person name="Inose Y."/>
            <person name="Matoba K."/>
            <person name="Toh H."/>
            <person name="Kuhara S."/>
            <person name="Hattori M."/>
            <person name="Ohta T."/>
        </authorList>
    </citation>
    <scope>NUCLEOTIDE SEQUENCE [LARGE SCALE GENOMIC DNA]</scope>
    <source>
        <strain>ATCC 15305 / DSM 20229 / NCIMB 8711 / NCTC 7292 / S-41</strain>
    </source>
</reference>
<keyword id="KW-0067">ATP-binding</keyword>
<keyword id="KW-0436">Ligase</keyword>
<keyword id="KW-0460">Magnesium</keyword>
<keyword id="KW-0479">Metal-binding</keyword>
<keyword id="KW-0520">NAD</keyword>
<keyword id="KW-0547">Nucleotide-binding</keyword>
<keyword id="KW-1185">Reference proteome</keyword>
<feature type="chain" id="PRO_1000077622" description="NH(3)-dependent NAD(+) synthetase">
    <location>
        <begin position="1"/>
        <end position="273"/>
    </location>
</feature>
<feature type="binding site" evidence="1">
    <location>
        <begin position="47"/>
        <end position="54"/>
    </location>
    <ligand>
        <name>ATP</name>
        <dbReference type="ChEBI" id="CHEBI:30616"/>
    </ligand>
</feature>
<feature type="binding site" evidence="1">
    <location>
        <position position="53"/>
    </location>
    <ligand>
        <name>Mg(2+)</name>
        <dbReference type="ChEBI" id="CHEBI:18420"/>
    </ligand>
</feature>
<feature type="binding site" evidence="1">
    <location>
        <position position="139"/>
    </location>
    <ligand>
        <name>deamido-NAD(+)</name>
        <dbReference type="ChEBI" id="CHEBI:58437"/>
    </ligand>
</feature>
<feature type="binding site" evidence="1">
    <location>
        <position position="159"/>
    </location>
    <ligand>
        <name>ATP</name>
        <dbReference type="ChEBI" id="CHEBI:30616"/>
    </ligand>
</feature>
<feature type="binding site" evidence="1">
    <location>
        <position position="164"/>
    </location>
    <ligand>
        <name>Mg(2+)</name>
        <dbReference type="ChEBI" id="CHEBI:18420"/>
    </ligand>
</feature>
<feature type="binding site" evidence="1">
    <location>
        <position position="172"/>
    </location>
    <ligand>
        <name>deamido-NAD(+)</name>
        <dbReference type="ChEBI" id="CHEBI:58437"/>
    </ligand>
</feature>
<feature type="binding site" evidence="1">
    <location>
        <position position="179"/>
    </location>
    <ligand>
        <name>deamido-NAD(+)</name>
        <dbReference type="ChEBI" id="CHEBI:58437"/>
    </ligand>
</feature>
<feature type="binding site" evidence="1">
    <location>
        <position position="188"/>
    </location>
    <ligand>
        <name>ATP</name>
        <dbReference type="ChEBI" id="CHEBI:30616"/>
    </ligand>
</feature>
<feature type="binding site" evidence="1">
    <location>
        <position position="210"/>
    </location>
    <ligand>
        <name>ATP</name>
        <dbReference type="ChEBI" id="CHEBI:30616"/>
    </ligand>
</feature>
<feature type="binding site" evidence="1">
    <location>
        <begin position="259"/>
        <end position="260"/>
    </location>
    <ligand>
        <name>deamido-NAD(+)</name>
        <dbReference type="ChEBI" id="CHEBI:58437"/>
    </ligand>
</feature>
<dbReference type="EC" id="6.3.1.5" evidence="1"/>
<dbReference type="EMBL" id="AP008934">
    <property type="protein sequence ID" value="BAE18024.1"/>
    <property type="molecule type" value="Genomic_DNA"/>
</dbReference>
<dbReference type="RefSeq" id="WP_011302758.1">
    <property type="nucleotide sequence ID" value="NZ_MTGA01000031.1"/>
</dbReference>
<dbReference type="SMR" id="Q49YV6"/>
<dbReference type="GeneID" id="3617075"/>
<dbReference type="KEGG" id="ssp:SSP0879"/>
<dbReference type="PATRIC" id="fig|342451.11.peg.878"/>
<dbReference type="eggNOG" id="COG0171">
    <property type="taxonomic scope" value="Bacteria"/>
</dbReference>
<dbReference type="HOGENOM" id="CLU_059327_3_0_9"/>
<dbReference type="OrthoDB" id="9803818at2"/>
<dbReference type="UniPathway" id="UPA00253">
    <property type="reaction ID" value="UER00333"/>
</dbReference>
<dbReference type="Proteomes" id="UP000006371">
    <property type="component" value="Chromosome"/>
</dbReference>
<dbReference type="GO" id="GO:0005737">
    <property type="term" value="C:cytoplasm"/>
    <property type="evidence" value="ECO:0007669"/>
    <property type="project" value="InterPro"/>
</dbReference>
<dbReference type="GO" id="GO:0005524">
    <property type="term" value="F:ATP binding"/>
    <property type="evidence" value="ECO:0007669"/>
    <property type="project" value="UniProtKB-UniRule"/>
</dbReference>
<dbReference type="GO" id="GO:0004359">
    <property type="term" value="F:glutaminase activity"/>
    <property type="evidence" value="ECO:0007669"/>
    <property type="project" value="InterPro"/>
</dbReference>
<dbReference type="GO" id="GO:0046872">
    <property type="term" value="F:metal ion binding"/>
    <property type="evidence" value="ECO:0007669"/>
    <property type="project" value="UniProtKB-KW"/>
</dbReference>
<dbReference type="GO" id="GO:0003952">
    <property type="term" value="F:NAD+ synthase (glutamine-hydrolyzing) activity"/>
    <property type="evidence" value="ECO:0007669"/>
    <property type="project" value="InterPro"/>
</dbReference>
<dbReference type="GO" id="GO:0008795">
    <property type="term" value="F:NAD+ synthase activity"/>
    <property type="evidence" value="ECO:0007669"/>
    <property type="project" value="UniProtKB-UniRule"/>
</dbReference>
<dbReference type="GO" id="GO:0009435">
    <property type="term" value="P:NAD biosynthetic process"/>
    <property type="evidence" value="ECO:0007669"/>
    <property type="project" value="UniProtKB-UniRule"/>
</dbReference>
<dbReference type="CDD" id="cd00553">
    <property type="entry name" value="NAD_synthase"/>
    <property type="match status" value="1"/>
</dbReference>
<dbReference type="FunFam" id="3.40.50.620:FF:000015">
    <property type="entry name" value="NH(3)-dependent NAD(+) synthetase"/>
    <property type="match status" value="1"/>
</dbReference>
<dbReference type="Gene3D" id="3.40.50.620">
    <property type="entry name" value="HUPs"/>
    <property type="match status" value="1"/>
</dbReference>
<dbReference type="HAMAP" id="MF_00193">
    <property type="entry name" value="NadE_ammonia_dep"/>
    <property type="match status" value="1"/>
</dbReference>
<dbReference type="InterPro" id="IPR022310">
    <property type="entry name" value="NAD/GMP_synthase"/>
</dbReference>
<dbReference type="InterPro" id="IPR003694">
    <property type="entry name" value="NAD_synthase"/>
</dbReference>
<dbReference type="InterPro" id="IPR022926">
    <property type="entry name" value="NH(3)-dep_NAD(+)_synth"/>
</dbReference>
<dbReference type="InterPro" id="IPR014729">
    <property type="entry name" value="Rossmann-like_a/b/a_fold"/>
</dbReference>
<dbReference type="NCBIfam" id="TIGR00552">
    <property type="entry name" value="nadE"/>
    <property type="match status" value="1"/>
</dbReference>
<dbReference type="NCBIfam" id="NF001979">
    <property type="entry name" value="PRK00768.1"/>
    <property type="match status" value="1"/>
</dbReference>
<dbReference type="PANTHER" id="PTHR23090">
    <property type="entry name" value="NH 3 /GLUTAMINE-DEPENDENT NAD + SYNTHETASE"/>
    <property type="match status" value="1"/>
</dbReference>
<dbReference type="PANTHER" id="PTHR23090:SF7">
    <property type="entry name" value="NH(3)-DEPENDENT NAD(+) SYNTHETASE"/>
    <property type="match status" value="1"/>
</dbReference>
<dbReference type="Pfam" id="PF02540">
    <property type="entry name" value="NAD_synthase"/>
    <property type="match status" value="1"/>
</dbReference>
<dbReference type="SUPFAM" id="SSF52402">
    <property type="entry name" value="Adenine nucleotide alpha hydrolases-like"/>
    <property type="match status" value="1"/>
</dbReference>
<evidence type="ECO:0000255" key="1">
    <source>
        <dbReference type="HAMAP-Rule" id="MF_00193"/>
    </source>
</evidence>
<gene>
    <name evidence="1" type="primary">nadE</name>
    <name type="ordered locus">SSP0879</name>
</gene>